<name>MATK_AUCJA</name>
<keyword id="KW-0150">Chloroplast</keyword>
<keyword id="KW-0507">mRNA processing</keyword>
<keyword id="KW-0934">Plastid</keyword>
<keyword id="KW-0694">RNA-binding</keyword>
<keyword id="KW-0819">tRNA processing</keyword>
<sequence>MEEFQRYLQLDRSQQHDFLYPLIFQEYIYALAHDHGLNRSILLKNTGSDNKSSLLIVKRLIIRMYQQNHLIIPVNDSNQNQLFGRNKNLYSQMISEGFAVIVEIPFSLRLIASLAGKEIVKSHNLRSIHSIFPFFENNFSHLNYVLDMLIPHPVHLEILVQTLRYWVKDASSLHLLRFFLYEYRNWNSLITPKKPSSSFSKKNQRLFFFLYNAHVCEYESIFVFLCNQSSYLRSTSSEAFLERIYFYGKIECLVEVFAKVFPVNLWLFKDPNMHYVRYQGKSIMASKGTSLLMNKWKYYLINFWQCHFYLWSHPGRIYINQLSNHSFDFMGYFSSVRLNPSMVRSQMLENSFLIDNAIKKFDTIVPIIPLIGSLAKAKFCNVLGYPISKPVRADLSDSDIIDRFGRICRNFSHYHSGSSKKKSLYRIKYILRLSCARTLARKHKSSVRFFLKRLGSELLEEFFMAEEQVLPLTFPRVSSTFQGLYRGRVWYLDIFCINDLANHE</sequence>
<gene>
    <name evidence="1" type="primary">matK</name>
</gene>
<reference key="1">
    <citation type="journal article" date="2002" name="Mol. Phylogenet. Evol.">
        <title>Phylogenetics of asterids based on 3 coding and 3 non-coding chloroplast DNA markers and the utility of non-coding DNA at higher taxonomic levels.</title>
        <authorList>
            <person name="Bremer B."/>
            <person name="Bremer K."/>
            <person name="Heidari N."/>
            <person name="Erixon P."/>
            <person name="Olmstead R.G."/>
            <person name="Anderberg A.A."/>
            <person name="Kallersjo M."/>
            <person name="Barkhordarian E."/>
        </authorList>
    </citation>
    <scope>NUCLEOTIDE SEQUENCE [GENOMIC DNA]</scope>
</reference>
<comment type="function">
    <text evidence="1">Usually encoded in the trnK tRNA gene intron. Probably assists in splicing its own and other chloroplast group II introns.</text>
</comment>
<comment type="subcellular location">
    <subcellularLocation>
        <location>Plastid</location>
        <location>Chloroplast</location>
    </subcellularLocation>
</comment>
<comment type="similarity">
    <text evidence="1">Belongs to the intron maturase 2 family. MatK subfamily.</text>
</comment>
<organism>
    <name type="scientific">Aucuba japonica</name>
    <name type="common">Japanese laurel</name>
    <name type="synonym">Spotted laurel</name>
    <dbReference type="NCBI Taxonomy" id="16901"/>
    <lineage>
        <taxon>Eukaryota</taxon>
        <taxon>Viridiplantae</taxon>
        <taxon>Streptophyta</taxon>
        <taxon>Embryophyta</taxon>
        <taxon>Tracheophyta</taxon>
        <taxon>Spermatophyta</taxon>
        <taxon>Magnoliopsida</taxon>
        <taxon>eudicotyledons</taxon>
        <taxon>Gunneridae</taxon>
        <taxon>Pentapetalae</taxon>
        <taxon>asterids</taxon>
        <taxon>lamiids</taxon>
        <taxon>Garryales</taxon>
        <taxon>Garryaceae</taxon>
        <taxon>Aucuba</taxon>
    </lineage>
</organism>
<accession>Q8MC94</accession>
<geneLocation type="chloroplast"/>
<feature type="chain" id="PRO_0000143267" description="Maturase K">
    <location>
        <begin position="1"/>
        <end position="504"/>
    </location>
</feature>
<proteinExistence type="inferred from homology"/>
<dbReference type="EMBL" id="AJ429318">
    <property type="protein sequence ID" value="CAD22214.1"/>
    <property type="molecule type" value="Genomic_DNA"/>
</dbReference>
<dbReference type="RefSeq" id="YP_010215132.1">
    <property type="nucleotide sequence ID" value="NC_058874.1"/>
</dbReference>
<dbReference type="GeneID" id="68659882"/>
<dbReference type="GO" id="GO:0009507">
    <property type="term" value="C:chloroplast"/>
    <property type="evidence" value="ECO:0007669"/>
    <property type="project" value="UniProtKB-SubCell"/>
</dbReference>
<dbReference type="GO" id="GO:0003723">
    <property type="term" value="F:RNA binding"/>
    <property type="evidence" value="ECO:0007669"/>
    <property type="project" value="UniProtKB-KW"/>
</dbReference>
<dbReference type="GO" id="GO:0006397">
    <property type="term" value="P:mRNA processing"/>
    <property type="evidence" value="ECO:0007669"/>
    <property type="project" value="UniProtKB-KW"/>
</dbReference>
<dbReference type="GO" id="GO:0008380">
    <property type="term" value="P:RNA splicing"/>
    <property type="evidence" value="ECO:0007669"/>
    <property type="project" value="UniProtKB-UniRule"/>
</dbReference>
<dbReference type="GO" id="GO:0008033">
    <property type="term" value="P:tRNA processing"/>
    <property type="evidence" value="ECO:0007669"/>
    <property type="project" value="UniProtKB-KW"/>
</dbReference>
<dbReference type="HAMAP" id="MF_01390">
    <property type="entry name" value="MatK"/>
    <property type="match status" value="1"/>
</dbReference>
<dbReference type="InterPro" id="IPR024937">
    <property type="entry name" value="Domain_X"/>
</dbReference>
<dbReference type="InterPro" id="IPR002866">
    <property type="entry name" value="Maturase_MatK"/>
</dbReference>
<dbReference type="InterPro" id="IPR024942">
    <property type="entry name" value="Maturase_MatK_N"/>
</dbReference>
<dbReference type="PANTHER" id="PTHR34811">
    <property type="entry name" value="MATURASE K"/>
    <property type="match status" value="1"/>
</dbReference>
<dbReference type="PANTHER" id="PTHR34811:SF1">
    <property type="entry name" value="MATURASE K"/>
    <property type="match status" value="1"/>
</dbReference>
<dbReference type="Pfam" id="PF01348">
    <property type="entry name" value="Intron_maturas2"/>
    <property type="match status" value="1"/>
</dbReference>
<dbReference type="Pfam" id="PF01824">
    <property type="entry name" value="MatK_N"/>
    <property type="match status" value="1"/>
</dbReference>
<evidence type="ECO:0000255" key="1">
    <source>
        <dbReference type="HAMAP-Rule" id="MF_01390"/>
    </source>
</evidence>
<protein>
    <recommendedName>
        <fullName evidence="1">Maturase K</fullName>
    </recommendedName>
    <alternativeName>
        <fullName evidence="1">Intron maturase</fullName>
    </alternativeName>
</protein>